<protein>
    <recommendedName>
        <fullName evidence="1">Protoheme IX farnesyltransferase</fullName>
        <ecNumber evidence="1">2.5.1.141</ecNumber>
    </recommendedName>
    <alternativeName>
        <fullName evidence="1">Heme B farnesyltransferase</fullName>
    </alternativeName>
    <alternativeName>
        <fullName evidence="1">Heme O synthase</fullName>
    </alternativeName>
</protein>
<proteinExistence type="inferred from homology"/>
<feature type="chain" id="PRO_0000326977" description="Protoheme IX farnesyltransferase">
    <location>
        <begin position="1"/>
        <end position="296"/>
    </location>
</feature>
<feature type="transmembrane region" description="Helical" evidence="1">
    <location>
        <begin position="14"/>
        <end position="34"/>
    </location>
</feature>
<feature type="transmembrane region" description="Helical" evidence="1">
    <location>
        <begin position="36"/>
        <end position="56"/>
    </location>
</feature>
<feature type="transmembrane region" description="Helical" evidence="1">
    <location>
        <begin position="75"/>
        <end position="95"/>
    </location>
</feature>
<feature type="transmembrane region" description="Helical" evidence="1">
    <location>
        <begin position="99"/>
        <end position="119"/>
    </location>
</feature>
<feature type="transmembrane region" description="Helical" evidence="1">
    <location>
        <begin position="133"/>
        <end position="153"/>
    </location>
</feature>
<feature type="transmembrane region" description="Helical" evidence="1">
    <location>
        <begin position="163"/>
        <end position="183"/>
    </location>
</feature>
<feature type="transmembrane region" description="Helical" evidence="1">
    <location>
        <begin position="209"/>
        <end position="229"/>
    </location>
</feature>
<feature type="transmembrane region" description="Helical" evidence="1">
    <location>
        <begin position="234"/>
        <end position="254"/>
    </location>
</feature>
<feature type="transmembrane region" description="Helical" evidence="1">
    <location>
        <begin position="265"/>
        <end position="285"/>
    </location>
</feature>
<name>CYOE_YERE8</name>
<dbReference type="EC" id="2.5.1.141" evidence="1"/>
<dbReference type="EMBL" id="AM286415">
    <property type="protein sequence ID" value="CAL13180.1"/>
    <property type="molecule type" value="Genomic_DNA"/>
</dbReference>
<dbReference type="RefSeq" id="YP_001007327.1">
    <property type="nucleotide sequence ID" value="NC_008800.1"/>
</dbReference>
<dbReference type="SMR" id="A1JNP6"/>
<dbReference type="KEGG" id="yen:YE3145"/>
<dbReference type="PATRIC" id="fig|393305.7.peg.3349"/>
<dbReference type="eggNOG" id="COG0109">
    <property type="taxonomic scope" value="Bacteria"/>
</dbReference>
<dbReference type="HOGENOM" id="CLU_029631_0_0_6"/>
<dbReference type="OrthoDB" id="9814417at2"/>
<dbReference type="UniPathway" id="UPA00834">
    <property type="reaction ID" value="UER00712"/>
</dbReference>
<dbReference type="Proteomes" id="UP000000642">
    <property type="component" value="Chromosome"/>
</dbReference>
<dbReference type="GO" id="GO:0005886">
    <property type="term" value="C:plasma membrane"/>
    <property type="evidence" value="ECO:0007669"/>
    <property type="project" value="UniProtKB-SubCell"/>
</dbReference>
<dbReference type="GO" id="GO:0008495">
    <property type="term" value="F:protoheme IX farnesyltransferase activity"/>
    <property type="evidence" value="ECO:0007669"/>
    <property type="project" value="UniProtKB-UniRule"/>
</dbReference>
<dbReference type="GO" id="GO:0048034">
    <property type="term" value="P:heme O biosynthetic process"/>
    <property type="evidence" value="ECO:0007669"/>
    <property type="project" value="UniProtKB-UniRule"/>
</dbReference>
<dbReference type="CDD" id="cd13957">
    <property type="entry name" value="PT_UbiA_Cox10"/>
    <property type="match status" value="1"/>
</dbReference>
<dbReference type="FunFam" id="1.10.357.140:FF:000001">
    <property type="entry name" value="Protoheme IX farnesyltransferase"/>
    <property type="match status" value="1"/>
</dbReference>
<dbReference type="Gene3D" id="1.10.357.140">
    <property type="entry name" value="UbiA prenyltransferase"/>
    <property type="match status" value="1"/>
</dbReference>
<dbReference type="HAMAP" id="MF_00154">
    <property type="entry name" value="CyoE_CtaB"/>
    <property type="match status" value="1"/>
</dbReference>
<dbReference type="InterPro" id="IPR006369">
    <property type="entry name" value="Protohaem_IX_farnesylTrfase"/>
</dbReference>
<dbReference type="InterPro" id="IPR000537">
    <property type="entry name" value="UbiA_prenyltransferase"/>
</dbReference>
<dbReference type="InterPro" id="IPR030470">
    <property type="entry name" value="UbiA_prenylTrfase_CS"/>
</dbReference>
<dbReference type="InterPro" id="IPR044878">
    <property type="entry name" value="UbiA_sf"/>
</dbReference>
<dbReference type="NCBIfam" id="TIGR01473">
    <property type="entry name" value="cyoE_ctaB"/>
    <property type="match status" value="1"/>
</dbReference>
<dbReference type="NCBIfam" id="NF003348">
    <property type="entry name" value="PRK04375.1-1"/>
    <property type="match status" value="1"/>
</dbReference>
<dbReference type="PANTHER" id="PTHR43448">
    <property type="entry name" value="PROTOHEME IX FARNESYLTRANSFERASE, MITOCHONDRIAL"/>
    <property type="match status" value="1"/>
</dbReference>
<dbReference type="PANTHER" id="PTHR43448:SF2">
    <property type="entry name" value="PROTOHEME IX FARNESYLTRANSFERASE, MITOCHONDRIAL"/>
    <property type="match status" value="1"/>
</dbReference>
<dbReference type="Pfam" id="PF01040">
    <property type="entry name" value="UbiA"/>
    <property type="match status" value="1"/>
</dbReference>
<dbReference type="PROSITE" id="PS00943">
    <property type="entry name" value="UBIA"/>
    <property type="match status" value="1"/>
</dbReference>
<reference key="1">
    <citation type="journal article" date="2006" name="PLoS Genet.">
        <title>The complete genome sequence and comparative genome analysis of the high pathogenicity Yersinia enterocolitica strain 8081.</title>
        <authorList>
            <person name="Thomson N.R."/>
            <person name="Howard S."/>
            <person name="Wren B.W."/>
            <person name="Holden M.T.G."/>
            <person name="Crossman L."/>
            <person name="Challis G.L."/>
            <person name="Churcher C."/>
            <person name="Mungall K."/>
            <person name="Brooks K."/>
            <person name="Chillingworth T."/>
            <person name="Feltwell T."/>
            <person name="Abdellah Z."/>
            <person name="Hauser H."/>
            <person name="Jagels K."/>
            <person name="Maddison M."/>
            <person name="Moule S."/>
            <person name="Sanders M."/>
            <person name="Whitehead S."/>
            <person name="Quail M.A."/>
            <person name="Dougan G."/>
            <person name="Parkhill J."/>
            <person name="Prentice M.B."/>
        </authorList>
    </citation>
    <scope>NUCLEOTIDE SEQUENCE [LARGE SCALE GENOMIC DNA]</scope>
    <source>
        <strain>NCTC 13174 / 8081</strain>
    </source>
</reference>
<keyword id="KW-0997">Cell inner membrane</keyword>
<keyword id="KW-1003">Cell membrane</keyword>
<keyword id="KW-0350">Heme biosynthesis</keyword>
<keyword id="KW-0472">Membrane</keyword>
<keyword id="KW-0808">Transferase</keyword>
<keyword id="KW-0812">Transmembrane</keyword>
<keyword id="KW-1133">Transmembrane helix</keyword>
<sequence length="296" mass="32252">MMIKQYLQVTKPGIIFGNLISVVGGFLLASKGVIDYPLFLATLFGVSLVVASGCVFNNYIDRDIDRIMERTKNRVLVKGLIDPKVSLIYASILGIAGMLLLYVGANPLAMWLAVIGFVIYVGVYSLYMKRKSVYGTLIGSLSGAAPPVIGYCAVTGQFDMGALILLLIFSLWQMPHSYAIAIFRFKDYQAANIPVLPVIKGISVTKNHITLYILAFMVATLMLTLSGYAGYKYLVVAAAVSVWWLGMALRGYKATNDSVWARKLFVFSIIAITSLSVMMSVDFNVPSSAGLLTYVG</sequence>
<gene>
    <name evidence="1" type="primary">cyoE</name>
    <name type="ordered locus">YE3145</name>
</gene>
<organism>
    <name type="scientific">Yersinia enterocolitica serotype O:8 / biotype 1B (strain NCTC 13174 / 8081)</name>
    <dbReference type="NCBI Taxonomy" id="393305"/>
    <lineage>
        <taxon>Bacteria</taxon>
        <taxon>Pseudomonadati</taxon>
        <taxon>Pseudomonadota</taxon>
        <taxon>Gammaproteobacteria</taxon>
        <taxon>Enterobacterales</taxon>
        <taxon>Yersiniaceae</taxon>
        <taxon>Yersinia</taxon>
    </lineage>
</organism>
<comment type="function">
    <text evidence="1">Converts heme B (protoheme IX) to heme O by substitution of the vinyl group on carbon 2 of heme B porphyrin ring with a hydroxyethyl farnesyl side group.</text>
</comment>
<comment type="catalytic activity">
    <reaction evidence="1">
        <text>heme b + (2E,6E)-farnesyl diphosphate + H2O = Fe(II)-heme o + diphosphate</text>
        <dbReference type="Rhea" id="RHEA:28070"/>
        <dbReference type="ChEBI" id="CHEBI:15377"/>
        <dbReference type="ChEBI" id="CHEBI:33019"/>
        <dbReference type="ChEBI" id="CHEBI:60344"/>
        <dbReference type="ChEBI" id="CHEBI:60530"/>
        <dbReference type="ChEBI" id="CHEBI:175763"/>
        <dbReference type="EC" id="2.5.1.141"/>
    </reaction>
</comment>
<comment type="pathway">
    <text evidence="1">Porphyrin-containing compound metabolism; heme O biosynthesis; heme O from protoheme: step 1/1.</text>
</comment>
<comment type="subcellular location">
    <subcellularLocation>
        <location evidence="1">Cell inner membrane</location>
        <topology evidence="1">Multi-pass membrane protein</topology>
    </subcellularLocation>
</comment>
<comment type="miscellaneous">
    <text evidence="1">Carbon 2 of the heme B porphyrin ring is defined according to the Fischer nomenclature.</text>
</comment>
<comment type="similarity">
    <text evidence="1">Belongs to the UbiA prenyltransferase family. Protoheme IX farnesyltransferase subfamily.</text>
</comment>
<evidence type="ECO:0000255" key="1">
    <source>
        <dbReference type="HAMAP-Rule" id="MF_00154"/>
    </source>
</evidence>
<accession>A1JNP6</accession>